<protein>
    <recommendedName>
        <fullName>Alpha-crystallin A chain</fullName>
    </recommendedName>
</protein>
<comment type="function">
    <text evidence="4">Contributes to the transparency and refractive index of the lens. Acts as a chaperone, preventing aggregation of various proteins under a wide range of stress conditions. Required for the correct formation of lens intermediate filaments as part of a complex composed of BFSP1, BFSP2 and CRYAA.</text>
</comment>
<comment type="subunit">
    <text evidence="2 4">Heteromer composed of three CRYAA and one CRYAB subunits. Inter-subunit bridging via zinc ions enhances stability, which is crucial as there is no protein turn over in the lens. Can also form homodimers and homotetramers (dimers of dimers) which serve as the building blocks of homooligomers (By similarity). Within homooligomers, the zinc-binding motif is created from residues of 3 different molecules. His-100 and Glu-102 from one molecule are ligands of the zinc ion, and His-107 and His-154 residues from additional molecules complete the site with tetrahedral coordination geometry (By similarity). Part of a complex required for lens intermediate filament formation composed of BFSP1, BFSP2 and CRYAA (By similarity).</text>
</comment>
<comment type="subcellular location">
    <subcellularLocation>
        <location evidence="4">Cytoplasm</location>
    </subcellularLocation>
    <subcellularLocation>
        <location evidence="4">Nucleus</location>
    </subcellularLocation>
    <text evidence="4">Translocates to the nucleus during heat shock and resides in sub-nuclear structures known as SC35 speckles or nuclear splicing speckles.</text>
</comment>
<comment type="PTM">
    <text evidence="4">Acetylation at Lys-70 may increase chaperone activity.</text>
</comment>
<comment type="PTM">
    <text evidence="4">Undergoes age-dependent proteolytical cleavage at the C-terminus.</text>
</comment>
<comment type="similarity">
    <text evidence="5">Belongs to the small heat shock protein (HSP20) family.</text>
</comment>
<sequence>MDIAIQHPWFKRALGPFYPSRLFDQFFGEGLFEYDLLPFLSSTISPYYRQPVFRSVLDSGISEVRSDRDKFVIFLDVKHFSPEDLTVKVLEDFVEIHGKHNERQDDHGYISREFHRRYRLPSNVDQSALSCSLSADGMLTFSGPKVPSGVDAGHSERAIPVSREEKPSSAPSS</sequence>
<dbReference type="PIR" id="B94432">
    <property type="entry name" value="CYZCAA"/>
</dbReference>
<dbReference type="RefSeq" id="XP_027439550.1">
    <property type="nucleotide sequence ID" value="XM_027583749.2"/>
</dbReference>
<dbReference type="SMR" id="P68288"/>
<dbReference type="GlyCosmos" id="P68288">
    <property type="glycosylation" value="1 site, No reported glycans"/>
</dbReference>
<dbReference type="GeneID" id="113916784"/>
<dbReference type="OrthoDB" id="1431247at2759"/>
<dbReference type="Proteomes" id="UP000515165">
    <property type="component" value="Chromosome 1"/>
</dbReference>
<dbReference type="GO" id="GO:0005737">
    <property type="term" value="C:cytoplasm"/>
    <property type="evidence" value="ECO:0000250"/>
    <property type="project" value="UniProtKB"/>
</dbReference>
<dbReference type="GO" id="GO:0005634">
    <property type="term" value="C:nucleus"/>
    <property type="evidence" value="ECO:0000250"/>
    <property type="project" value="UniProtKB"/>
</dbReference>
<dbReference type="GO" id="GO:0046872">
    <property type="term" value="F:metal ion binding"/>
    <property type="evidence" value="ECO:0007669"/>
    <property type="project" value="UniProtKB-KW"/>
</dbReference>
<dbReference type="GO" id="GO:0005212">
    <property type="term" value="F:structural constituent of eye lens"/>
    <property type="evidence" value="ECO:0007669"/>
    <property type="project" value="UniProtKB-KW"/>
</dbReference>
<dbReference type="GO" id="GO:0051082">
    <property type="term" value="F:unfolded protein binding"/>
    <property type="evidence" value="ECO:0007669"/>
    <property type="project" value="TreeGrafter"/>
</dbReference>
<dbReference type="GO" id="GO:0002088">
    <property type="term" value="P:lens development in camera-type eye"/>
    <property type="evidence" value="ECO:0007669"/>
    <property type="project" value="TreeGrafter"/>
</dbReference>
<dbReference type="GO" id="GO:0043066">
    <property type="term" value="P:negative regulation of apoptotic process"/>
    <property type="evidence" value="ECO:0007669"/>
    <property type="project" value="TreeGrafter"/>
</dbReference>
<dbReference type="GO" id="GO:0042026">
    <property type="term" value="P:protein refolding"/>
    <property type="evidence" value="ECO:0007669"/>
    <property type="project" value="TreeGrafter"/>
</dbReference>
<dbReference type="GO" id="GO:0009408">
    <property type="term" value="P:response to heat"/>
    <property type="evidence" value="ECO:0007669"/>
    <property type="project" value="TreeGrafter"/>
</dbReference>
<dbReference type="CDD" id="cd06497">
    <property type="entry name" value="ACD_alphaA-crystallin_HspB4"/>
    <property type="match status" value="1"/>
</dbReference>
<dbReference type="FunFam" id="2.60.40.790:FF:000008">
    <property type="entry name" value="Alpha-crystallin A chain"/>
    <property type="match status" value="1"/>
</dbReference>
<dbReference type="Gene3D" id="2.60.40.790">
    <property type="match status" value="1"/>
</dbReference>
<dbReference type="InterPro" id="IPR002068">
    <property type="entry name" value="A-crystallin/Hsp20_dom"/>
</dbReference>
<dbReference type="InterPro" id="IPR055269">
    <property type="entry name" value="Alpha-crystallin/HSP_16"/>
</dbReference>
<dbReference type="InterPro" id="IPR001436">
    <property type="entry name" value="Alpha-crystallin/sHSP_animal"/>
</dbReference>
<dbReference type="InterPro" id="IPR003090">
    <property type="entry name" value="Alpha-crystallin_N"/>
</dbReference>
<dbReference type="InterPro" id="IPR008978">
    <property type="entry name" value="HSP20-like_chaperone"/>
</dbReference>
<dbReference type="PANTHER" id="PTHR45640:SF14">
    <property type="entry name" value="ALPHA-CRYSTALLIN A CHAIN"/>
    <property type="match status" value="1"/>
</dbReference>
<dbReference type="PANTHER" id="PTHR45640">
    <property type="entry name" value="HEAT SHOCK PROTEIN HSP-12.2-RELATED"/>
    <property type="match status" value="1"/>
</dbReference>
<dbReference type="Pfam" id="PF00525">
    <property type="entry name" value="Crystallin"/>
    <property type="match status" value="1"/>
</dbReference>
<dbReference type="Pfam" id="PF00011">
    <property type="entry name" value="HSP20"/>
    <property type="match status" value="1"/>
</dbReference>
<dbReference type="PIRSF" id="PIRSF036514">
    <property type="entry name" value="Sm_HSP_B1"/>
    <property type="match status" value="1"/>
</dbReference>
<dbReference type="PRINTS" id="PR00299">
    <property type="entry name" value="ACRYSTALLIN"/>
</dbReference>
<dbReference type="SUPFAM" id="SSF49764">
    <property type="entry name" value="HSP20-like chaperones"/>
    <property type="match status" value="1"/>
</dbReference>
<dbReference type="PROSITE" id="PS01031">
    <property type="entry name" value="SHSP"/>
    <property type="match status" value="1"/>
</dbReference>
<proteinExistence type="evidence at protein level"/>
<feature type="chain" id="PRO_0000125891" description="Alpha-crystallin A chain">
    <location>
        <begin position="1"/>
        <end position="173"/>
    </location>
</feature>
<feature type="domain" description="sHSP" evidence="5">
    <location>
        <begin position="52"/>
        <end position="162"/>
    </location>
</feature>
<feature type="region of interest" description="Required for complex formation with BFSP1 and BFSP2" evidence="4">
    <location>
        <begin position="1"/>
        <end position="63"/>
    </location>
</feature>
<feature type="region of interest" description="Disordered" evidence="6">
    <location>
        <begin position="144"/>
        <end position="173"/>
    </location>
</feature>
<feature type="compositionally biased region" description="Basic and acidic residues" evidence="6">
    <location>
        <begin position="153"/>
        <end position="167"/>
    </location>
</feature>
<feature type="binding site" evidence="2">
    <location>
        <position position="100"/>
    </location>
    <ligand>
        <name>Zn(2+)</name>
        <dbReference type="ChEBI" id="CHEBI:29105"/>
        <label>1</label>
    </ligand>
</feature>
<feature type="binding site" evidence="2">
    <location>
        <position position="102"/>
    </location>
    <ligand>
        <name>Zn(2+)</name>
        <dbReference type="ChEBI" id="CHEBI:29105"/>
        <label>1</label>
    </ligand>
</feature>
<feature type="binding site" evidence="2">
    <location>
        <position position="107"/>
    </location>
    <ligand>
        <name>Zn(2+)</name>
        <dbReference type="ChEBI" id="CHEBI:29105"/>
        <label>2</label>
    </ligand>
</feature>
<feature type="binding site" evidence="2">
    <location>
        <position position="154"/>
    </location>
    <ligand>
        <name>Zn(2+)</name>
        <dbReference type="ChEBI" id="CHEBI:29105"/>
        <label>3</label>
    </ligand>
</feature>
<feature type="modified residue" description="N-acetylmethionine" evidence="3 7">
    <location>
        <position position="1"/>
    </location>
</feature>
<feature type="modified residue" description="Deamidated glutamine; partial" evidence="1">
    <location>
        <position position="6"/>
    </location>
</feature>
<feature type="modified residue" description="Phosphoserine" evidence="4">
    <location>
        <position position="45"/>
    </location>
</feature>
<feature type="modified residue" description="Deamidated glutamine; partial" evidence="1">
    <location>
        <position position="50"/>
    </location>
</feature>
<feature type="modified residue" description="N6-acetyllysine" evidence="4">
    <location>
        <position position="70"/>
    </location>
</feature>
<feature type="modified residue" description="N6-acetyllysine" evidence="4">
    <location>
        <position position="99"/>
    </location>
</feature>
<feature type="modified residue" description="Deamidated asparagine; partial" evidence="1">
    <location>
        <position position="101"/>
    </location>
</feature>
<feature type="modified residue" description="Phosphoserine" evidence="2">
    <location>
        <position position="122"/>
    </location>
</feature>
<feature type="modified residue" description="Deamidated asparagine; partial" evidence="1">
    <location>
        <position position="123"/>
    </location>
</feature>
<feature type="glycosylation site" description="O-linked (GlcNAc) serine" evidence="1">
    <location>
        <position position="162"/>
    </location>
</feature>
<gene>
    <name type="primary">CRYAA</name>
</gene>
<name>CRYAA_ZALCA</name>
<reference key="1">
    <citation type="book" date="1980" name="Protides of the biological fluids, Proc. 28th colloquium">
        <title>Trends in the molecular evolution of alpha-crystallin.</title>
        <editorList>
            <person name="Peeters H."/>
        </editorList>
        <authorList>
            <person name="de Jong W.W."/>
            <person name="Zweers A."/>
            <person name="Goodman M."/>
        </authorList>
    </citation>
    <scope>PROTEIN SEQUENCE</scope>
</reference>
<organism>
    <name type="scientific">Zalophus californianus</name>
    <name type="common">California sealion</name>
    <dbReference type="NCBI Taxonomy" id="9704"/>
    <lineage>
        <taxon>Eukaryota</taxon>
        <taxon>Metazoa</taxon>
        <taxon>Chordata</taxon>
        <taxon>Craniata</taxon>
        <taxon>Vertebrata</taxon>
        <taxon>Euteleostomi</taxon>
        <taxon>Mammalia</taxon>
        <taxon>Eutheria</taxon>
        <taxon>Laurasiatheria</taxon>
        <taxon>Carnivora</taxon>
        <taxon>Caniformia</taxon>
        <taxon>Pinnipedia</taxon>
        <taxon>Otariidae</taxon>
        <taxon>Zalophus</taxon>
    </lineage>
</organism>
<keyword id="KW-0007">Acetylation</keyword>
<keyword id="KW-0143">Chaperone</keyword>
<keyword id="KW-0963">Cytoplasm</keyword>
<keyword id="KW-0903">Direct protein sequencing</keyword>
<keyword id="KW-0273">Eye lens protein</keyword>
<keyword id="KW-0325">Glycoprotein</keyword>
<keyword id="KW-0479">Metal-binding</keyword>
<keyword id="KW-0488">Methylation</keyword>
<keyword id="KW-0539">Nucleus</keyword>
<keyword id="KW-0597">Phosphoprotein</keyword>
<keyword id="KW-0862">Zinc</keyword>
<evidence type="ECO:0000250" key="1"/>
<evidence type="ECO:0000250" key="2">
    <source>
        <dbReference type="UniProtKB" id="P02470"/>
    </source>
</evidence>
<evidence type="ECO:0000250" key="3">
    <source>
        <dbReference type="UniProtKB" id="P02474"/>
    </source>
</evidence>
<evidence type="ECO:0000250" key="4">
    <source>
        <dbReference type="UniProtKB" id="P02489"/>
    </source>
</evidence>
<evidence type="ECO:0000255" key="5">
    <source>
        <dbReference type="PROSITE-ProRule" id="PRU00285"/>
    </source>
</evidence>
<evidence type="ECO:0000256" key="6">
    <source>
        <dbReference type="SAM" id="MobiDB-lite"/>
    </source>
</evidence>
<evidence type="ECO:0000305" key="7"/>
<accession>P68288</accession>
<accession>P02481</accession>